<gene>
    <name type="primary">MIC27</name>
    <name type="synonym">AIM37</name>
    <name type="synonym">MCS27</name>
    <name type="ordered locus">YNL100W</name>
    <name type="ORF">N2190</name>
</gene>
<evidence type="ECO:0000255" key="1"/>
<evidence type="ECO:0000269" key="2">
    <source>
    </source>
</evidence>
<evidence type="ECO:0000269" key="3">
    <source>
    </source>
</evidence>
<evidence type="ECO:0000269" key="4">
    <source>
    </source>
</evidence>
<evidence type="ECO:0000269" key="5">
    <source>
    </source>
</evidence>
<evidence type="ECO:0000269" key="6">
    <source>
    </source>
</evidence>
<evidence type="ECO:0000305" key="7"/>
<protein>
    <recommendedName>
        <fullName>MICOS complex subunit MIC27</fullName>
    </recommendedName>
    <alternativeName>
        <fullName>Altered inheritance of mitochondria protein 37</fullName>
    </alternativeName>
    <alternativeName>
        <fullName>Mitochondrial contact site complex 27 kDa subunit</fullName>
    </alternativeName>
</protein>
<name>MIC27_YEAST</name>
<proteinExistence type="evidence at protein level"/>
<comment type="function">
    <text evidence="4 5">Component of the MICOS complex, a large protein complex of the mitochondrial inner membrane that plays crucial roles in the maintenance of crista junctions, inner membrane architecture, and formation of contact sites to the outer membrane.</text>
</comment>
<comment type="subunit">
    <text evidence="6">Component of the mitochondrial contact site and cristae organizing system (MICOS) complex, composed of at least MIC10, MIC12, MIC19, MIC26, MIC27 and MIC60. This complex was also known under the names MINOS or MitOS complex.</text>
</comment>
<comment type="subcellular location">
    <subcellularLocation>
        <location evidence="7">Mitochondrion inner membrane</location>
        <topology evidence="7">Multi-pass membrane protein</topology>
    </subcellularLocation>
    <text evidence="2 4 5 6">Enriched at crista junctions.</text>
</comment>
<comment type="disruption phenotype">
    <text evidence="3 4 5">Increases frequency of mitochondrial genome loss. Partially altered shape of the mitochondrial network with condensed, fragmented mitochondria accumulating at the periphery of cells. 20-40% of mitochondria exhibit an increased inner membrane surface and stacks of lamellar cristae disconnected from the inner boundary membrane.</text>
</comment>
<comment type="similarity">
    <text evidence="7">Belongs to the apolipoprotein O/MICOS complex subunit Mic27 family.</text>
</comment>
<accession>P50945</accession>
<accession>D6W179</accession>
<accession>Q45U03</accession>
<feature type="chain" id="PRO_0000203438" description="MICOS complex subunit MIC27">
    <location>
        <begin position="1"/>
        <end position="234"/>
    </location>
</feature>
<feature type="topological domain" description="Mitochondrial intermembrane" evidence="1">
    <location>
        <begin position="1"/>
        <end position="100"/>
    </location>
</feature>
<feature type="transmembrane region" description="Helical" evidence="1">
    <location>
        <begin position="101"/>
        <end position="120"/>
    </location>
</feature>
<feature type="topological domain" description="Mitochondrial matrix" evidence="1">
    <location>
        <begin position="121"/>
        <end position="141"/>
    </location>
</feature>
<feature type="transmembrane region" description="Helical" evidence="1">
    <location>
        <begin position="142"/>
        <end position="161"/>
    </location>
</feature>
<feature type="topological domain" description="Mitochondrial intermembrane" evidence="1">
    <location>
        <begin position="162"/>
        <end position="234"/>
    </location>
</feature>
<organism>
    <name type="scientific">Saccharomyces cerevisiae (strain ATCC 204508 / S288c)</name>
    <name type="common">Baker's yeast</name>
    <dbReference type="NCBI Taxonomy" id="559292"/>
    <lineage>
        <taxon>Eukaryota</taxon>
        <taxon>Fungi</taxon>
        <taxon>Dikarya</taxon>
        <taxon>Ascomycota</taxon>
        <taxon>Saccharomycotina</taxon>
        <taxon>Saccharomycetes</taxon>
        <taxon>Saccharomycetales</taxon>
        <taxon>Saccharomycetaceae</taxon>
        <taxon>Saccharomyces</taxon>
    </lineage>
</organism>
<sequence>MVNFYDDVDESKSHGEFPLIPVVLQNSSELSVRTIPTGNEIIESVHLTKWLRKYRNALASQLDRYEKGWQSKIANFRLQVQHVINYSRKNIFNVDSENKHTVVPGSLIALGAFFAGSIAVNRSNWGAKRLIFGHKSSILEKLCTSLPSRILLPWVLAAATFKYWAPQTSQNLVNATENDLLPADFVKSYHNTWKRIYEEGYVAKKCDLKRQIDQTLQKNIRYAREQLYEKLEQA</sequence>
<keyword id="KW-0472">Membrane</keyword>
<keyword id="KW-0496">Mitochondrion</keyword>
<keyword id="KW-0999">Mitochondrion inner membrane</keyword>
<keyword id="KW-1185">Reference proteome</keyword>
<keyword id="KW-0812">Transmembrane</keyword>
<keyword id="KW-1133">Transmembrane helix</keyword>
<dbReference type="EMBL" id="DQ115393">
    <property type="protein sequence ID" value="AAZ22507.1"/>
    <property type="molecule type" value="Genomic_DNA"/>
</dbReference>
<dbReference type="EMBL" id="Z50161">
    <property type="protein sequence ID" value="CAA90526.1"/>
    <property type="molecule type" value="Genomic_DNA"/>
</dbReference>
<dbReference type="EMBL" id="Z71376">
    <property type="protein sequence ID" value="CAA95976.1"/>
    <property type="molecule type" value="Genomic_DNA"/>
</dbReference>
<dbReference type="EMBL" id="AY692704">
    <property type="protein sequence ID" value="AAT92723.1"/>
    <property type="molecule type" value="Genomic_DNA"/>
</dbReference>
<dbReference type="EMBL" id="BK006947">
    <property type="protein sequence ID" value="DAA10445.1"/>
    <property type="molecule type" value="Genomic_DNA"/>
</dbReference>
<dbReference type="PIR" id="S58252">
    <property type="entry name" value="S58252"/>
</dbReference>
<dbReference type="RefSeq" id="NP_014299.1">
    <property type="nucleotide sequence ID" value="NM_001182938.1"/>
</dbReference>
<dbReference type="SMR" id="P50945"/>
<dbReference type="BioGRID" id="35723">
    <property type="interactions" value="163"/>
</dbReference>
<dbReference type="ComplexPortal" id="CPX-140">
    <property type="entry name" value="MICOS mitochondrial contact site and cristae organizing system complex"/>
</dbReference>
<dbReference type="DIP" id="DIP-2042N"/>
<dbReference type="FunCoup" id="P50945">
    <property type="interactions" value="72"/>
</dbReference>
<dbReference type="IntAct" id="P50945">
    <property type="interactions" value="9"/>
</dbReference>
<dbReference type="MINT" id="P50945"/>
<dbReference type="STRING" id="4932.YNL100W"/>
<dbReference type="PaxDb" id="4932-YNL100W"/>
<dbReference type="PeptideAtlas" id="P50945"/>
<dbReference type="EnsemblFungi" id="YNL100W_mRNA">
    <property type="protein sequence ID" value="YNL100W"/>
    <property type="gene ID" value="YNL100W"/>
</dbReference>
<dbReference type="GeneID" id="855623"/>
<dbReference type="KEGG" id="sce:YNL100W"/>
<dbReference type="AGR" id="SGD:S000005044"/>
<dbReference type="SGD" id="S000005044">
    <property type="gene designation" value="MIC27"/>
</dbReference>
<dbReference type="VEuPathDB" id="FungiDB:YNL100W"/>
<dbReference type="eggNOG" id="ENOG502S31N">
    <property type="taxonomic scope" value="Eukaryota"/>
</dbReference>
<dbReference type="HOGENOM" id="CLU_093584_0_0_1"/>
<dbReference type="InParanoid" id="P50945"/>
<dbReference type="OMA" id="KYKVCKG"/>
<dbReference type="OrthoDB" id="4039294at2759"/>
<dbReference type="BioCyc" id="YEAST:G3O-33128-MONOMER"/>
<dbReference type="BioGRID-ORCS" id="855623">
    <property type="hits" value="3 hits in 10 CRISPR screens"/>
</dbReference>
<dbReference type="PRO" id="PR:P50945"/>
<dbReference type="Proteomes" id="UP000002311">
    <property type="component" value="Chromosome XIV"/>
</dbReference>
<dbReference type="RNAct" id="P50945">
    <property type="molecule type" value="protein"/>
</dbReference>
<dbReference type="GO" id="GO:0061617">
    <property type="term" value="C:MICOS complex"/>
    <property type="evidence" value="ECO:0000314"/>
    <property type="project" value="SGD"/>
</dbReference>
<dbReference type="GO" id="GO:0044284">
    <property type="term" value="C:mitochondrial crista junction"/>
    <property type="evidence" value="ECO:0000314"/>
    <property type="project" value="ComplexPortal"/>
</dbReference>
<dbReference type="GO" id="GO:0005743">
    <property type="term" value="C:mitochondrial inner membrane"/>
    <property type="evidence" value="ECO:0000304"/>
    <property type="project" value="Reactome"/>
</dbReference>
<dbReference type="GO" id="GO:0005739">
    <property type="term" value="C:mitochondrion"/>
    <property type="evidence" value="ECO:0000314"/>
    <property type="project" value="ComplexPortal"/>
</dbReference>
<dbReference type="GO" id="GO:0042407">
    <property type="term" value="P:cristae formation"/>
    <property type="evidence" value="ECO:0000315"/>
    <property type="project" value="SGD"/>
</dbReference>
<dbReference type="GO" id="GO:0032461">
    <property type="term" value="P:positive regulation of protein oligomerization"/>
    <property type="evidence" value="ECO:0000315"/>
    <property type="project" value="SGD"/>
</dbReference>
<dbReference type="GO" id="GO:0043933">
    <property type="term" value="P:protein-containing complex organization"/>
    <property type="evidence" value="ECO:0000315"/>
    <property type="project" value="SGD"/>
</dbReference>
<reference key="1">
    <citation type="journal article" date="2005" name="Nat. Genet.">
        <title>Quantitative trait loci mapped to single-nucleotide resolution in yeast.</title>
        <authorList>
            <person name="Deutschbauer A.M."/>
            <person name="Davis R.W."/>
        </authorList>
    </citation>
    <scope>NUCLEOTIDE SEQUENCE [GENOMIC DNA]</scope>
    <source>
        <strain>SK1</strain>
    </source>
</reference>
<reference key="2">
    <citation type="journal article" date="1996" name="Yeast">
        <title>The sequence of a 21.3 kb DNA fragment from the left arm of yeast chromosome XIV reveals LEU4, MET4, POL1, RAS2, and six new open reading frames.</title>
        <authorList>
            <person name="Saiz J.E."/>
            <person name="Buitrago M.J."/>
            <person name="Soler A."/>
            <person name="del Rey F."/>
            <person name="Revuelta J.L."/>
        </authorList>
    </citation>
    <scope>NUCLEOTIDE SEQUENCE [GENOMIC DNA]</scope>
    <source>
        <strain>ATCC 96604 / S288c / FY1679</strain>
    </source>
</reference>
<reference key="3">
    <citation type="journal article" date="1997" name="Nature">
        <title>The nucleotide sequence of Saccharomyces cerevisiae chromosome XIV and its evolutionary implications.</title>
        <authorList>
            <person name="Philippsen P."/>
            <person name="Kleine K."/>
            <person name="Poehlmann R."/>
            <person name="Duesterhoeft A."/>
            <person name="Hamberg K."/>
            <person name="Hegemann J.H."/>
            <person name="Obermaier B."/>
            <person name="Urrestarazu L.A."/>
            <person name="Aert R."/>
            <person name="Albermann K."/>
            <person name="Altmann R."/>
            <person name="Andre B."/>
            <person name="Baladron V."/>
            <person name="Ballesta J.P.G."/>
            <person name="Becam A.-M."/>
            <person name="Beinhauer J.D."/>
            <person name="Boskovic J."/>
            <person name="Buitrago M.J."/>
            <person name="Bussereau F."/>
            <person name="Coster F."/>
            <person name="Crouzet M."/>
            <person name="D'Angelo M."/>
            <person name="Dal Pero F."/>
            <person name="De Antoni A."/>
            <person name="del Rey F."/>
            <person name="Doignon F."/>
            <person name="Domdey H."/>
            <person name="Dubois E."/>
            <person name="Fiedler T.A."/>
            <person name="Fleig U."/>
            <person name="Floeth M."/>
            <person name="Fritz C."/>
            <person name="Gaillardin C."/>
            <person name="Garcia-Cantalejo J.M."/>
            <person name="Glansdorff N."/>
            <person name="Goffeau A."/>
            <person name="Gueldener U."/>
            <person name="Herbert C.J."/>
            <person name="Heumann K."/>
            <person name="Heuss-Neitzel D."/>
            <person name="Hilbert H."/>
            <person name="Hinni K."/>
            <person name="Iraqui Houssaini I."/>
            <person name="Jacquet M."/>
            <person name="Jimenez A."/>
            <person name="Jonniaux J.-L."/>
            <person name="Karpfinger-Hartl L."/>
            <person name="Lanfranchi G."/>
            <person name="Lepingle A."/>
            <person name="Levesque H."/>
            <person name="Lyck R."/>
            <person name="Maftahi M."/>
            <person name="Mallet L."/>
            <person name="Maurer C.T.C."/>
            <person name="Messenguy F."/>
            <person name="Mewes H.-W."/>
            <person name="Moestl D."/>
            <person name="Nasr F."/>
            <person name="Nicaud J.-M."/>
            <person name="Niedenthal R.K."/>
            <person name="Pandolfo D."/>
            <person name="Pierard A."/>
            <person name="Piravandi E."/>
            <person name="Planta R.J."/>
            <person name="Pohl T.M."/>
            <person name="Purnelle B."/>
            <person name="Rebischung C."/>
            <person name="Remacha M.A."/>
            <person name="Revuelta J.L."/>
            <person name="Rinke M."/>
            <person name="Saiz J.E."/>
            <person name="Sartorello F."/>
            <person name="Scherens B."/>
            <person name="Sen-Gupta M."/>
            <person name="Soler-Mira A."/>
            <person name="Urbanus J.H.M."/>
            <person name="Valle G."/>
            <person name="Van Dyck L."/>
            <person name="Verhasselt P."/>
            <person name="Vierendeels F."/>
            <person name="Vissers S."/>
            <person name="Voet M."/>
            <person name="Volckaert G."/>
            <person name="Wach A."/>
            <person name="Wambutt R."/>
            <person name="Wedler H."/>
            <person name="Zollner A."/>
            <person name="Hani J."/>
        </authorList>
    </citation>
    <scope>NUCLEOTIDE SEQUENCE [LARGE SCALE GENOMIC DNA]</scope>
    <source>
        <strain>ATCC 204508 / S288c</strain>
    </source>
</reference>
<reference key="4">
    <citation type="journal article" date="2014" name="G3 (Bethesda)">
        <title>The reference genome sequence of Saccharomyces cerevisiae: Then and now.</title>
        <authorList>
            <person name="Engel S.R."/>
            <person name="Dietrich F.S."/>
            <person name="Fisk D.G."/>
            <person name="Binkley G."/>
            <person name="Balakrishnan R."/>
            <person name="Costanzo M.C."/>
            <person name="Dwight S.S."/>
            <person name="Hitz B.C."/>
            <person name="Karra K."/>
            <person name="Nash R.S."/>
            <person name="Weng S."/>
            <person name="Wong E.D."/>
            <person name="Lloyd P."/>
            <person name="Skrzypek M.S."/>
            <person name="Miyasato S.R."/>
            <person name="Simison M."/>
            <person name="Cherry J.M."/>
        </authorList>
    </citation>
    <scope>GENOME REANNOTATION</scope>
    <source>
        <strain>ATCC 204508 / S288c</strain>
    </source>
</reference>
<reference key="5">
    <citation type="journal article" date="2007" name="Genome Res.">
        <title>Approaching a complete repository of sequence-verified protein-encoding clones for Saccharomyces cerevisiae.</title>
        <authorList>
            <person name="Hu Y."/>
            <person name="Rolfs A."/>
            <person name="Bhullar B."/>
            <person name="Murthy T.V.S."/>
            <person name="Zhu C."/>
            <person name="Berger M.F."/>
            <person name="Camargo A.A."/>
            <person name="Kelley F."/>
            <person name="McCarron S."/>
            <person name="Jepson D."/>
            <person name="Richardson A."/>
            <person name="Raphael J."/>
            <person name="Moreira D."/>
            <person name="Taycher E."/>
            <person name="Zuo D."/>
            <person name="Mohr S."/>
            <person name="Kane M.F."/>
            <person name="Williamson J."/>
            <person name="Simpson A.J.G."/>
            <person name="Bulyk M.L."/>
            <person name="Harlow E."/>
            <person name="Marsischky G."/>
            <person name="Kolodner R.D."/>
            <person name="LaBaer J."/>
        </authorList>
    </citation>
    <scope>NUCLEOTIDE SEQUENCE [GENOMIC DNA]</scope>
    <source>
        <strain>ATCC 204508 / S288c</strain>
    </source>
</reference>
<reference key="6">
    <citation type="journal article" date="2003" name="Nature">
        <title>Global analysis of protein localization in budding yeast.</title>
        <authorList>
            <person name="Huh W.-K."/>
            <person name="Falvo J.V."/>
            <person name="Gerke L.C."/>
            <person name="Carroll A.S."/>
            <person name="Howson R.W."/>
            <person name="Weissman J.S."/>
            <person name="O'Shea E.K."/>
        </authorList>
    </citation>
    <scope>SUBCELLULAR LOCATION [LARGE SCALE ANALYSIS]</scope>
</reference>
<reference key="7">
    <citation type="journal article" date="2003" name="Nature">
        <title>Global analysis of protein expression in yeast.</title>
        <authorList>
            <person name="Ghaemmaghami S."/>
            <person name="Huh W.-K."/>
            <person name="Bower K."/>
            <person name="Howson R.W."/>
            <person name="Belle A."/>
            <person name="Dephoure N."/>
            <person name="O'Shea E.K."/>
            <person name="Weissman J.S."/>
        </authorList>
    </citation>
    <scope>LEVEL OF PROTEIN EXPRESSION [LARGE SCALE ANALYSIS]</scope>
</reference>
<reference key="8">
    <citation type="journal article" date="2006" name="Bioinformatics">
        <title>A scalable method for integration and functional analysis of multiple microarray datasets.</title>
        <authorList>
            <person name="Huttenhower C."/>
            <person name="Hibbs M."/>
            <person name="Myers C."/>
            <person name="Troyanskaya O.G."/>
        </authorList>
    </citation>
    <scope>PREDICTION OF FUNCTION</scope>
</reference>
<reference key="9">
    <citation type="journal article" date="2009" name="PLoS Genet.">
        <title>Computationally driven, quantitative experiments discover genes required for mitochondrial biogenesis.</title>
        <authorList>
            <person name="Hess D.C."/>
            <person name="Myers C.L."/>
            <person name="Huttenhower C."/>
            <person name="Hibbs M.A."/>
            <person name="Hayes A.P."/>
            <person name="Paw J."/>
            <person name="Clore J.J."/>
            <person name="Mendoza R.M."/>
            <person name="Luis B.S."/>
            <person name="Nislow C."/>
            <person name="Giaever G."/>
            <person name="Costanzo M."/>
            <person name="Troyanskaya O.G."/>
            <person name="Caudy A.A."/>
        </authorList>
    </citation>
    <scope>DISRUPTION PHENOTYPE</scope>
</reference>
<reference key="10">
    <citation type="journal article" date="2011" name="Dev. Cell">
        <title>Dual role of mitofilin in mitochondrial membrane organization and protein biogenesis.</title>
        <authorList>
            <person name="von der Malsburg K."/>
            <person name="Muller J.M."/>
            <person name="Bohnert M."/>
            <person name="Oeljeklaus S."/>
            <person name="Kwiatkowska P."/>
            <person name="Becker T."/>
            <person name="Loniewska-Lwowska A."/>
            <person name="Wiese S."/>
            <person name="Rao S."/>
            <person name="Milenkovic D."/>
            <person name="Hutu D.P."/>
            <person name="Zerbes R.M."/>
            <person name="Schulze-Specking A."/>
            <person name="Meyer H.E."/>
            <person name="Martinou J.C."/>
            <person name="Rospert S."/>
            <person name="Rehling P."/>
            <person name="Meisinger C."/>
            <person name="Veenhuis M."/>
            <person name="Warscheid B."/>
            <person name="van der Klei I.J."/>
            <person name="Pfanner N."/>
            <person name="Chacinska A."/>
            <person name="van der Laan M."/>
        </authorList>
    </citation>
    <scope>FUNCTION</scope>
    <scope>COMPOSITION OF THE MICOS COMPLEX</scope>
    <scope>SUBCELLULAR LOCATION</scope>
    <scope>DISRUPTION PHENOTYPE</scope>
</reference>
<reference key="11">
    <citation type="journal article" date="2011" name="EMBO J.">
        <title>The mitochondrial contact site complex, a determinant of mitochondrial architecture.</title>
        <authorList>
            <person name="Harner M."/>
            <person name="Korner C."/>
            <person name="Walther D."/>
            <person name="Mokranjac D."/>
            <person name="Kaesmacher J."/>
            <person name="Welsch U."/>
            <person name="Griffith J."/>
            <person name="Mann M."/>
            <person name="Reggiori F."/>
            <person name="Neupert W."/>
        </authorList>
    </citation>
    <scope>IDENTIFICATION IN THE MICOS COMPLEX</scope>
    <scope>MASS SPECTROMETRY</scope>
    <scope>SUBCELLULAR LOCATION</scope>
    <scope>TOPOLOGY</scope>
</reference>
<reference key="12">
    <citation type="journal article" date="2011" name="J. Cell Biol.">
        <title>A mitochondrial-focused genetic interaction map reveals a scaffold-like complex required for inner membrane organization in mitochondria.</title>
        <authorList>
            <person name="Hoppins S."/>
            <person name="Collins S.R."/>
            <person name="Cassidy-Stone A."/>
            <person name="Hummel E."/>
            <person name="Devay R.M."/>
            <person name="Lackner L.L."/>
            <person name="Westermann B."/>
            <person name="Schuldiner M."/>
            <person name="Weissman J.S."/>
            <person name="Nunnari J."/>
        </authorList>
    </citation>
    <scope>FUNCTION</scope>
    <scope>COMPOSITION OF THE MICOS COMPLEX</scope>
    <scope>SUBCELLULAR LOCATION</scope>
    <scope>DISRUPTION PHENOTYPE</scope>
</reference>
<reference key="13">
    <citation type="journal article" date="2014" name="J. Cell Biol.">
        <title>Uniform nomenclature for the mitochondrial contact site and cristae organizing system.</title>
        <authorList>
            <person name="Pfanner N."/>
            <person name="van der Laan M."/>
            <person name="Amati P."/>
            <person name="Capaldi R.A."/>
            <person name="Caudy A.A."/>
            <person name="Chacinska A."/>
            <person name="Darshi M."/>
            <person name="Deckers M."/>
            <person name="Hoppins S."/>
            <person name="Icho T."/>
            <person name="Jakobs S."/>
            <person name="Ji J."/>
            <person name="Kozjak-Pavlovic V."/>
            <person name="Meisinger C."/>
            <person name="Odgren P.R."/>
            <person name="Park S.K."/>
            <person name="Rehling P."/>
            <person name="Reichert A.S."/>
            <person name="Sheikh M.S."/>
            <person name="Taylor S.S."/>
            <person name="Tsuchida N."/>
            <person name="van der Bliek A.M."/>
            <person name="van der Klei I.J."/>
            <person name="Weissman J.S."/>
            <person name="Westermann B."/>
            <person name="Zha J."/>
            <person name="Neupert W."/>
            <person name="Nunnari J."/>
        </authorList>
    </citation>
    <scope>NOMENCLATURE</scope>
</reference>